<comment type="function">
    <text evidence="1">Inhibits all the catalytic activities of DNA gyrase by preventing its interaction with DNA. Acts by binding directly to the C-terminal domain of GyrB, which probably disrupts DNA binding by the gyrase.</text>
</comment>
<comment type="cofactor">
    <cofactor evidence="1">
        <name>Zn(2+)</name>
        <dbReference type="ChEBI" id="CHEBI:29105"/>
    </cofactor>
    <text evidence="1">Binds 1 zinc ion.</text>
</comment>
<comment type="subunit">
    <text evidence="1">Interacts with GyrB.</text>
</comment>
<comment type="similarity">
    <text evidence="1">Belongs to the DNA gyrase inhibitor YacG family.</text>
</comment>
<sequence length="68" mass="7900">MESEQIQVNCPTCGKVVIWGEQSPFRPFCCKRCQLIDLGEWADEEKRIPSDTELSDSDEWSEEDPLKH</sequence>
<protein>
    <recommendedName>
        <fullName evidence="1">DNA gyrase inhibitor YacG</fullName>
    </recommendedName>
</protein>
<evidence type="ECO:0000255" key="1">
    <source>
        <dbReference type="HAMAP-Rule" id="MF_00649"/>
    </source>
</evidence>
<evidence type="ECO:0000256" key="2">
    <source>
        <dbReference type="SAM" id="MobiDB-lite"/>
    </source>
</evidence>
<proteinExistence type="inferred from homology"/>
<keyword id="KW-0479">Metal-binding</keyword>
<keyword id="KW-0862">Zinc</keyword>
<name>YACG_YERPY</name>
<dbReference type="EMBL" id="CP000950">
    <property type="protein sequence ID" value="ACA69772.1"/>
    <property type="molecule type" value="Genomic_DNA"/>
</dbReference>
<dbReference type="RefSeq" id="WP_002209317.1">
    <property type="nucleotide sequence ID" value="NZ_CP009792.1"/>
</dbReference>
<dbReference type="SMR" id="B1JK68"/>
<dbReference type="GeneID" id="57975278"/>
<dbReference type="KEGG" id="ypy:YPK_3505"/>
<dbReference type="PATRIC" id="fig|502800.11.peg.4248"/>
<dbReference type="GO" id="GO:0008657">
    <property type="term" value="F:DNA topoisomerase type II (double strand cut, ATP-hydrolyzing) inhibitor activity"/>
    <property type="evidence" value="ECO:0007669"/>
    <property type="project" value="UniProtKB-UniRule"/>
</dbReference>
<dbReference type="GO" id="GO:0008270">
    <property type="term" value="F:zinc ion binding"/>
    <property type="evidence" value="ECO:0007669"/>
    <property type="project" value="UniProtKB-UniRule"/>
</dbReference>
<dbReference type="GO" id="GO:0006355">
    <property type="term" value="P:regulation of DNA-templated transcription"/>
    <property type="evidence" value="ECO:0007669"/>
    <property type="project" value="InterPro"/>
</dbReference>
<dbReference type="Gene3D" id="3.30.50.10">
    <property type="entry name" value="Erythroid Transcription Factor GATA-1, subunit A"/>
    <property type="match status" value="1"/>
</dbReference>
<dbReference type="HAMAP" id="MF_00649">
    <property type="entry name" value="DNA_gyrase_inhibitor_YacG"/>
    <property type="match status" value="1"/>
</dbReference>
<dbReference type="InterPro" id="IPR005584">
    <property type="entry name" value="DNA_gyrase_inhibitor_YacG"/>
</dbReference>
<dbReference type="InterPro" id="IPR013088">
    <property type="entry name" value="Znf_NHR/GATA"/>
</dbReference>
<dbReference type="NCBIfam" id="NF001638">
    <property type="entry name" value="PRK00418.1"/>
    <property type="match status" value="1"/>
</dbReference>
<dbReference type="PANTHER" id="PTHR36150">
    <property type="entry name" value="DNA GYRASE INHIBITOR YACG"/>
    <property type="match status" value="1"/>
</dbReference>
<dbReference type="PANTHER" id="PTHR36150:SF1">
    <property type="entry name" value="DNA GYRASE INHIBITOR YACG"/>
    <property type="match status" value="1"/>
</dbReference>
<dbReference type="Pfam" id="PF03884">
    <property type="entry name" value="YacG"/>
    <property type="match status" value="1"/>
</dbReference>
<dbReference type="SUPFAM" id="SSF57716">
    <property type="entry name" value="Glucocorticoid receptor-like (DNA-binding domain)"/>
    <property type="match status" value="1"/>
</dbReference>
<reference key="1">
    <citation type="submission" date="2008-02" db="EMBL/GenBank/DDBJ databases">
        <title>Complete sequence of Yersinia pseudotuberculosis YPIII.</title>
        <authorList>
            <consortium name="US DOE Joint Genome Institute"/>
            <person name="Copeland A."/>
            <person name="Lucas S."/>
            <person name="Lapidus A."/>
            <person name="Glavina del Rio T."/>
            <person name="Dalin E."/>
            <person name="Tice H."/>
            <person name="Bruce D."/>
            <person name="Goodwin L."/>
            <person name="Pitluck S."/>
            <person name="Munk A.C."/>
            <person name="Brettin T."/>
            <person name="Detter J.C."/>
            <person name="Han C."/>
            <person name="Tapia R."/>
            <person name="Schmutz J."/>
            <person name="Larimer F."/>
            <person name="Land M."/>
            <person name="Hauser L."/>
            <person name="Challacombe J.F."/>
            <person name="Green L."/>
            <person name="Lindler L.E."/>
            <person name="Nikolich M.P."/>
            <person name="Richardson P."/>
        </authorList>
    </citation>
    <scope>NUCLEOTIDE SEQUENCE [LARGE SCALE GENOMIC DNA]</scope>
    <source>
        <strain>YPIII</strain>
    </source>
</reference>
<accession>B1JK68</accession>
<gene>
    <name evidence="1" type="primary">yacG</name>
    <name type="ordered locus">YPK_3505</name>
</gene>
<organism>
    <name type="scientific">Yersinia pseudotuberculosis serotype O:3 (strain YPIII)</name>
    <dbReference type="NCBI Taxonomy" id="502800"/>
    <lineage>
        <taxon>Bacteria</taxon>
        <taxon>Pseudomonadati</taxon>
        <taxon>Pseudomonadota</taxon>
        <taxon>Gammaproteobacteria</taxon>
        <taxon>Enterobacterales</taxon>
        <taxon>Yersiniaceae</taxon>
        <taxon>Yersinia</taxon>
    </lineage>
</organism>
<feature type="chain" id="PRO_1000130985" description="DNA gyrase inhibitor YacG">
    <location>
        <begin position="1"/>
        <end position="68"/>
    </location>
</feature>
<feature type="region of interest" description="Disordered" evidence="2">
    <location>
        <begin position="45"/>
        <end position="68"/>
    </location>
</feature>
<feature type="compositionally biased region" description="Acidic residues" evidence="2">
    <location>
        <begin position="53"/>
        <end position="68"/>
    </location>
</feature>
<feature type="binding site" evidence="1">
    <location>
        <position position="10"/>
    </location>
    <ligand>
        <name>Zn(2+)</name>
        <dbReference type="ChEBI" id="CHEBI:29105"/>
    </ligand>
</feature>
<feature type="binding site" evidence="1">
    <location>
        <position position="13"/>
    </location>
    <ligand>
        <name>Zn(2+)</name>
        <dbReference type="ChEBI" id="CHEBI:29105"/>
    </ligand>
</feature>
<feature type="binding site" evidence="1">
    <location>
        <position position="29"/>
    </location>
    <ligand>
        <name>Zn(2+)</name>
        <dbReference type="ChEBI" id="CHEBI:29105"/>
    </ligand>
</feature>
<feature type="binding site" evidence="1">
    <location>
        <position position="33"/>
    </location>
    <ligand>
        <name>Zn(2+)</name>
        <dbReference type="ChEBI" id="CHEBI:29105"/>
    </ligand>
</feature>